<comment type="function">
    <text evidence="1">Involved in the biosynthesis of the chorismate, which leads to the biosynthesis of aromatic amino acids. Catalyzes the reversible NADPH linked reduction of 3-dehydroshikimate (DHSA) to yield shikimate (SA).</text>
</comment>
<comment type="catalytic activity">
    <reaction evidence="1">
        <text>shikimate + NADP(+) = 3-dehydroshikimate + NADPH + H(+)</text>
        <dbReference type="Rhea" id="RHEA:17737"/>
        <dbReference type="ChEBI" id="CHEBI:15378"/>
        <dbReference type="ChEBI" id="CHEBI:16630"/>
        <dbReference type="ChEBI" id="CHEBI:36208"/>
        <dbReference type="ChEBI" id="CHEBI:57783"/>
        <dbReference type="ChEBI" id="CHEBI:58349"/>
        <dbReference type="EC" id="1.1.1.25"/>
    </reaction>
</comment>
<comment type="pathway">
    <text evidence="1">Metabolic intermediate biosynthesis; chorismate biosynthesis; chorismate from D-erythrose 4-phosphate and phosphoenolpyruvate: step 4/7.</text>
</comment>
<comment type="subunit">
    <text evidence="1">Homodimer.</text>
</comment>
<comment type="similarity">
    <text evidence="1">Belongs to the shikimate dehydrogenase family.</text>
</comment>
<gene>
    <name evidence="1" type="primary">aroE</name>
    <name type="ordered locus">Ta0284</name>
</gene>
<evidence type="ECO:0000255" key="1">
    <source>
        <dbReference type="HAMAP-Rule" id="MF_00222"/>
    </source>
</evidence>
<feature type="chain" id="PRO_0000136068" description="Shikimate dehydrogenase (NADP(+))">
    <location>
        <begin position="1"/>
        <end position="268"/>
    </location>
</feature>
<feature type="active site" description="Proton acceptor" evidence="1">
    <location>
        <position position="66"/>
    </location>
</feature>
<feature type="binding site" evidence="1">
    <location>
        <position position="62"/>
    </location>
    <ligand>
        <name>shikimate</name>
        <dbReference type="ChEBI" id="CHEBI:36208"/>
    </ligand>
</feature>
<feature type="binding site" evidence="1">
    <location>
        <position position="78"/>
    </location>
    <ligand>
        <name>NADP(+)</name>
        <dbReference type="ChEBI" id="CHEBI:58349"/>
    </ligand>
</feature>
<feature type="binding site" evidence="1">
    <location>
        <position position="87"/>
    </location>
    <ligand>
        <name>shikimate</name>
        <dbReference type="ChEBI" id="CHEBI:36208"/>
    </ligand>
</feature>
<feature type="binding site" evidence="1">
    <location>
        <position position="102"/>
    </location>
    <ligand>
        <name>shikimate</name>
        <dbReference type="ChEBI" id="CHEBI:36208"/>
    </ligand>
</feature>
<feature type="binding site" evidence="1">
    <location>
        <begin position="126"/>
        <end position="130"/>
    </location>
    <ligand>
        <name>NADP(+)</name>
        <dbReference type="ChEBI" id="CHEBI:58349"/>
    </ligand>
</feature>
<feature type="binding site" evidence="1">
    <location>
        <position position="207"/>
    </location>
    <ligand>
        <name>NADP(+)</name>
        <dbReference type="ChEBI" id="CHEBI:58349"/>
    </ligand>
</feature>
<feature type="binding site" evidence="1">
    <location>
        <position position="209"/>
    </location>
    <ligand>
        <name>shikimate</name>
        <dbReference type="ChEBI" id="CHEBI:36208"/>
    </ligand>
</feature>
<feature type="binding site" evidence="1">
    <location>
        <position position="230"/>
    </location>
    <ligand>
        <name>NADP(+)</name>
        <dbReference type="ChEBI" id="CHEBI:58349"/>
    </ligand>
</feature>
<sequence>MNGNSIIGLIGHPVSHSIGQILYNRIFQDMGIDAFYLAMDVHMNVLPAFLKNSFFLKAFNVTIPHKVSIIPFLDDLDEIASQTRSVNLVIREQSRMKGYNTDYYGLDYALSFNQVEIEEKRIVIAGSGGIARTVIRYMLDHGAHRVDVLTRNAQNARRNLDIPGIGLHENIDEDYDIYVNCTPLGTLGDGDPFSTVDFRSGRTGIDLVYNPPDTPFLKRMRNAGGRTVSGLDVFIGQGLRTLELVFGIRPDSIFREYAVEALNEIRKG</sequence>
<reference key="1">
    <citation type="journal article" date="2000" name="Nature">
        <title>The genome sequence of the thermoacidophilic scavenger Thermoplasma acidophilum.</title>
        <authorList>
            <person name="Ruepp A."/>
            <person name="Graml W."/>
            <person name="Santos-Martinez M.-L."/>
            <person name="Koretke K.K."/>
            <person name="Volker C."/>
            <person name="Mewes H.-W."/>
            <person name="Frishman D."/>
            <person name="Stocker S."/>
            <person name="Lupas A.N."/>
            <person name="Baumeister W."/>
        </authorList>
    </citation>
    <scope>NUCLEOTIDE SEQUENCE [LARGE SCALE GENOMIC DNA]</scope>
    <source>
        <strain>ATCC 25905 / DSM 1728 / JCM 9062 / NBRC 15155 / AMRC-C165</strain>
    </source>
</reference>
<protein>
    <recommendedName>
        <fullName evidence="1">Shikimate dehydrogenase (NADP(+))</fullName>
        <shortName evidence="1">SDH</shortName>
        <ecNumber evidence="1">1.1.1.25</ecNumber>
    </recommendedName>
</protein>
<proteinExistence type="inferred from homology"/>
<dbReference type="EC" id="1.1.1.25" evidence="1"/>
<dbReference type="EMBL" id="AL445063">
    <property type="protein sequence ID" value="CAC11429.1"/>
    <property type="molecule type" value="Genomic_DNA"/>
</dbReference>
<dbReference type="RefSeq" id="WP_010900713.1">
    <property type="nucleotide sequence ID" value="NC_002578.1"/>
</dbReference>
<dbReference type="SMR" id="Q9HLE4"/>
<dbReference type="STRING" id="273075.gene:9571501"/>
<dbReference type="PaxDb" id="273075-Ta0284"/>
<dbReference type="DNASU" id="1455913"/>
<dbReference type="EnsemblBacteria" id="CAC11429">
    <property type="protein sequence ID" value="CAC11429"/>
    <property type="gene ID" value="CAC11429"/>
</dbReference>
<dbReference type="KEGG" id="tac:Ta0284"/>
<dbReference type="eggNOG" id="arCOG01033">
    <property type="taxonomic scope" value="Archaea"/>
</dbReference>
<dbReference type="HOGENOM" id="CLU_044063_4_1_2"/>
<dbReference type="InParanoid" id="Q9HLE4"/>
<dbReference type="OrthoDB" id="8744at2157"/>
<dbReference type="UniPathway" id="UPA00053">
    <property type="reaction ID" value="UER00087"/>
</dbReference>
<dbReference type="Proteomes" id="UP000001024">
    <property type="component" value="Chromosome"/>
</dbReference>
<dbReference type="GO" id="GO:0005829">
    <property type="term" value="C:cytosol"/>
    <property type="evidence" value="ECO:0007669"/>
    <property type="project" value="TreeGrafter"/>
</dbReference>
<dbReference type="GO" id="GO:0050661">
    <property type="term" value="F:NADP binding"/>
    <property type="evidence" value="ECO:0007669"/>
    <property type="project" value="TreeGrafter"/>
</dbReference>
<dbReference type="GO" id="GO:0004764">
    <property type="term" value="F:shikimate 3-dehydrogenase (NADP+) activity"/>
    <property type="evidence" value="ECO:0007669"/>
    <property type="project" value="UniProtKB-UniRule"/>
</dbReference>
<dbReference type="GO" id="GO:0008652">
    <property type="term" value="P:amino acid biosynthetic process"/>
    <property type="evidence" value="ECO:0007669"/>
    <property type="project" value="UniProtKB-KW"/>
</dbReference>
<dbReference type="GO" id="GO:0009073">
    <property type="term" value="P:aromatic amino acid family biosynthetic process"/>
    <property type="evidence" value="ECO:0007669"/>
    <property type="project" value="UniProtKB-KW"/>
</dbReference>
<dbReference type="GO" id="GO:0009423">
    <property type="term" value="P:chorismate biosynthetic process"/>
    <property type="evidence" value="ECO:0007669"/>
    <property type="project" value="UniProtKB-UniRule"/>
</dbReference>
<dbReference type="GO" id="GO:0019632">
    <property type="term" value="P:shikimate metabolic process"/>
    <property type="evidence" value="ECO:0007669"/>
    <property type="project" value="TreeGrafter"/>
</dbReference>
<dbReference type="CDD" id="cd01065">
    <property type="entry name" value="NAD_bind_Shikimate_DH"/>
    <property type="match status" value="1"/>
</dbReference>
<dbReference type="Gene3D" id="3.40.50.10860">
    <property type="entry name" value="Leucine Dehydrogenase, chain A, domain 1"/>
    <property type="match status" value="1"/>
</dbReference>
<dbReference type="Gene3D" id="3.40.50.720">
    <property type="entry name" value="NAD(P)-binding Rossmann-like Domain"/>
    <property type="match status" value="1"/>
</dbReference>
<dbReference type="HAMAP" id="MF_00222">
    <property type="entry name" value="Shikimate_DH_AroE"/>
    <property type="match status" value="1"/>
</dbReference>
<dbReference type="InterPro" id="IPR046346">
    <property type="entry name" value="Aminoacid_DH-like_N_sf"/>
</dbReference>
<dbReference type="InterPro" id="IPR036291">
    <property type="entry name" value="NAD(P)-bd_dom_sf"/>
</dbReference>
<dbReference type="InterPro" id="IPR013708">
    <property type="entry name" value="Shikimate_DH-bd_N"/>
</dbReference>
<dbReference type="InterPro" id="IPR022893">
    <property type="entry name" value="Shikimate_DH_fam"/>
</dbReference>
<dbReference type="NCBIfam" id="NF001322">
    <property type="entry name" value="PRK00258.3-6"/>
    <property type="match status" value="1"/>
</dbReference>
<dbReference type="PANTHER" id="PTHR21089:SF1">
    <property type="entry name" value="BIFUNCTIONAL 3-DEHYDROQUINATE DEHYDRATASE_SHIKIMATE DEHYDROGENASE, CHLOROPLASTIC"/>
    <property type="match status" value="1"/>
</dbReference>
<dbReference type="PANTHER" id="PTHR21089">
    <property type="entry name" value="SHIKIMATE DEHYDROGENASE"/>
    <property type="match status" value="1"/>
</dbReference>
<dbReference type="Pfam" id="PF08501">
    <property type="entry name" value="Shikimate_dh_N"/>
    <property type="match status" value="1"/>
</dbReference>
<dbReference type="SUPFAM" id="SSF53223">
    <property type="entry name" value="Aminoacid dehydrogenase-like, N-terminal domain"/>
    <property type="match status" value="1"/>
</dbReference>
<dbReference type="SUPFAM" id="SSF51735">
    <property type="entry name" value="NAD(P)-binding Rossmann-fold domains"/>
    <property type="match status" value="1"/>
</dbReference>
<keyword id="KW-0028">Amino-acid biosynthesis</keyword>
<keyword id="KW-0057">Aromatic amino acid biosynthesis</keyword>
<keyword id="KW-0521">NADP</keyword>
<keyword id="KW-0560">Oxidoreductase</keyword>
<keyword id="KW-1185">Reference proteome</keyword>
<organism>
    <name type="scientific">Thermoplasma acidophilum (strain ATCC 25905 / DSM 1728 / JCM 9062 / NBRC 15155 / AMRC-C165)</name>
    <dbReference type="NCBI Taxonomy" id="273075"/>
    <lineage>
        <taxon>Archaea</taxon>
        <taxon>Methanobacteriati</taxon>
        <taxon>Thermoplasmatota</taxon>
        <taxon>Thermoplasmata</taxon>
        <taxon>Thermoplasmatales</taxon>
        <taxon>Thermoplasmataceae</taxon>
        <taxon>Thermoplasma</taxon>
    </lineage>
</organism>
<name>AROE_THEAC</name>
<accession>Q9HLE4</accession>